<protein>
    <recommendedName>
        <fullName evidence="1">L-fucose isomerase</fullName>
        <ecNumber evidence="1">5.3.1.25</ecNumber>
    </recommendedName>
    <alternativeName>
        <fullName evidence="1">6-deoxy-L-galactose isomerase</fullName>
    </alternativeName>
    <alternativeName>
        <fullName>FucIase</fullName>
    </alternativeName>
</protein>
<gene>
    <name evidence="1" type="primary">fucI</name>
    <name type="ordered locus">EcSMS35_2943</name>
</gene>
<organism>
    <name type="scientific">Escherichia coli (strain SMS-3-5 / SECEC)</name>
    <dbReference type="NCBI Taxonomy" id="439855"/>
    <lineage>
        <taxon>Bacteria</taxon>
        <taxon>Pseudomonadati</taxon>
        <taxon>Pseudomonadota</taxon>
        <taxon>Gammaproteobacteria</taxon>
        <taxon>Enterobacterales</taxon>
        <taxon>Enterobacteriaceae</taxon>
        <taxon>Escherichia</taxon>
    </lineage>
</organism>
<accession>B1LQZ6</accession>
<dbReference type="EC" id="5.3.1.25" evidence="1"/>
<dbReference type="EMBL" id="CP000970">
    <property type="protein sequence ID" value="ACB18771.1"/>
    <property type="molecule type" value="Genomic_DNA"/>
</dbReference>
<dbReference type="RefSeq" id="WP_000724164.1">
    <property type="nucleotide sequence ID" value="NC_010498.1"/>
</dbReference>
<dbReference type="SMR" id="B1LQZ6"/>
<dbReference type="KEGG" id="ecm:EcSMS35_2943"/>
<dbReference type="HOGENOM" id="CLU_033326_1_0_6"/>
<dbReference type="UniPathway" id="UPA00563">
    <property type="reaction ID" value="UER00624"/>
</dbReference>
<dbReference type="Proteomes" id="UP000007011">
    <property type="component" value="Chromosome"/>
</dbReference>
<dbReference type="GO" id="GO:0005737">
    <property type="term" value="C:cytoplasm"/>
    <property type="evidence" value="ECO:0007669"/>
    <property type="project" value="UniProtKB-SubCell"/>
</dbReference>
<dbReference type="GO" id="GO:0008790">
    <property type="term" value="F:arabinose isomerase activity"/>
    <property type="evidence" value="ECO:0007669"/>
    <property type="project" value="TreeGrafter"/>
</dbReference>
<dbReference type="GO" id="GO:0008736">
    <property type="term" value="F:L-fucose isomerase activity"/>
    <property type="evidence" value="ECO:0007669"/>
    <property type="project" value="UniProtKB-UniRule"/>
</dbReference>
<dbReference type="GO" id="GO:0030145">
    <property type="term" value="F:manganese ion binding"/>
    <property type="evidence" value="ECO:0007669"/>
    <property type="project" value="UniProtKB-UniRule"/>
</dbReference>
<dbReference type="GO" id="GO:0019571">
    <property type="term" value="P:D-arabinose catabolic process"/>
    <property type="evidence" value="ECO:0007669"/>
    <property type="project" value="TreeGrafter"/>
</dbReference>
<dbReference type="GO" id="GO:0042355">
    <property type="term" value="P:L-fucose catabolic process"/>
    <property type="evidence" value="ECO:0007669"/>
    <property type="project" value="UniProtKB-UniRule"/>
</dbReference>
<dbReference type="CDD" id="cd03556">
    <property type="entry name" value="L-fucose_isomerase"/>
    <property type="match status" value="1"/>
</dbReference>
<dbReference type="FunFam" id="3.20.14.10:FF:000001">
    <property type="entry name" value="L-fucose isomerase"/>
    <property type="match status" value="1"/>
</dbReference>
<dbReference type="FunFam" id="3.40.275.10:FF:000001">
    <property type="entry name" value="L-fucose isomerase"/>
    <property type="match status" value="1"/>
</dbReference>
<dbReference type="FunFam" id="3.40.50.1070:FF:000001">
    <property type="entry name" value="L-fucose isomerase"/>
    <property type="match status" value="1"/>
</dbReference>
<dbReference type="Gene3D" id="3.40.50.1070">
    <property type="match status" value="1"/>
</dbReference>
<dbReference type="Gene3D" id="3.40.275.10">
    <property type="entry name" value="L-fucose Isomerase, Chain A, domain 2"/>
    <property type="match status" value="1"/>
</dbReference>
<dbReference type="Gene3D" id="3.20.14.10">
    <property type="entry name" value="L-fucose/L-arabinose isomerase, C-terminal"/>
    <property type="match status" value="1"/>
</dbReference>
<dbReference type="HAMAP" id="MF_01254">
    <property type="entry name" value="Fucose_iso"/>
    <property type="match status" value="1"/>
</dbReference>
<dbReference type="InterPro" id="IPR004216">
    <property type="entry name" value="Fuc/Ara_isomerase_C"/>
</dbReference>
<dbReference type="InterPro" id="IPR038393">
    <property type="entry name" value="Fuc_iso_dom3_sf"/>
</dbReference>
<dbReference type="InterPro" id="IPR015888">
    <property type="entry name" value="Fuc_isomerase_C"/>
</dbReference>
<dbReference type="InterPro" id="IPR038391">
    <property type="entry name" value="Fucose_iso_dom1_sf"/>
</dbReference>
<dbReference type="InterPro" id="IPR012888">
    <property type="entry name" value="Fucose_iso_N1"/>
</dbReference>
<dbReference type="InterPro" id="IPR005763">
    <property type="entry name" value="Fucose_isomerase"/>
</dbReference>
<dbReference type="InterPro" id="IPR038392">
    <property type="entry name" value="Fucose_isomerase_dom2_sf"/>
</dbReference>
<dbReference type="InterPro" id="IPR009015">
    <property type="entry name" value="Fucose_isomerase_N/cen_sf"/>
</dbReference>
<dbReference type="InterPro" id="IPR012889">
    <property type="entry name" value="Fucose_isomerase_N2"/>
</dbReference>
<dbReference type="NCBIfam" id="TIGR01089">
    <property type="entry name" value="fucI"/>
    <property type="match status" value="1"/>
</dbReference>
<dbReference type="NCBIfam" id="NF008220">
    <property type="entry name" value="PRK10991.1"/>
    <property type="match status" value="1"/>
</dbReference>
<dbReference type="PANTHER" id="PTHR37840">
    <property type="entry name" value="L-FUCOSE ISOMERASE"/>
    <property type="match status" value="1"/>
</dbReference>
<dbReference type="PANTHER" id="PTHR37840:SF1">
    <property type="entry name" value="L-FUCOSE ISOMERASE"/>
    <property type="match status" value="1"/>
</dbReference>
<dbReference type="Pfam" id="PF02952">
    <property type="entry name" value="Fucose_iso_C"/>
    <property type="match status" value="1"/>
</dbReference>
<dbReference type="Pfam" id="PF07881">
    <property type="entry name" value="Fucose_iso_N1"/>
    <property type="match status" value="1"/>
</dbReference>
<dbReference type="Pfam" id="PF07882">
    <property type="entry name" value="Fucose_iso_N2"/>
    <property type="match status" value="1"/>
</dbReference>
<dbReference type="SUPFAM" id="SSF50443">
    <property type="entry name" value="FucI/AraA C-terminal domain-like"/>
    <property type="match status" value="1"/>
</dbReference>
<dbReference type="SUPFAM" id="SSF53743">
    <property type="entry name" value="FucI/AraA N-terminal and middle domains"/>
    <property type="match status" value="1"/>
</dbReference>
<proteinExistence type="inferred from homology"/>
<reference key="1">
    <citation type="journal article" date="2008" name="J. Bacteriol.">
        <title>Insights into the environmental resistance gene pool from the genome sequence of the multidrug-resistant environmental isolate Escherichia coli SMS-3-5.</title>
        <authorList>
            <person name="Fricke W.F."/>
            <person name="Wright M.S."/>
            <person name="Lindell A.H."/>
            <person name="Harkins D.M."/>
            <person name="Baker-Austin C."/>
            <person name="Ravel J."/>
            <person name="Stepanauskas R."/>
        </authorList>
    </citation>
    <scope>NUCLEOTIDE SEQUENCE [LARGE SCALE GENOMIC DNA]</scope>
    <source>
        <strain>SMS-3-5 / SECEC</strain>
    </source>
</reference>
<keyword id="KW-0119">Carbohydrate metabolism</keyword>
<keyword id="KW-0963">Cytoplasm</keyword>
<keyword id="KW-0294">Fucose metabolism</keyword>
<keyword id="KW-0413">Isomerase</keyword>
<keyword id="KW-0464">Manganese</keyword>
<keyword id="KW-0479">Metal-binding</keyword>
<name>FUCI_ECOSM</name>
<evidence type="ECO:0000255" key="1">
    <source>
        <dbReference type="HAMAP-Rule" id="MF_01254"/>
    </source>
</evidence>
<comment type="function">
    <text evidence="1">Converts the aldose L-fucose into the corresponding ketose L-fuculose.</text>
</comment>
<comment type="catalytic activity">
    <reaction evidence="1">
        <text>L-fucose = L-fuculose</text>
        <dbReference type="Rhea" id="RHEA:17233"/>
        <dbReference type="ChEBI" id="CHEBI:2181"/>
        <dbReference type="ChEBI" id="CHEBI:17617"/>
        <dbReference type="EC" id="5.3.1.25"/>
    </reaction>
</comment>
<comment type="cofactor">
    <cofactor evidence="1">
        <name>Mn(2+)</name>
        <dbReference type="ChEBI" id="CHEBI:29035"/>
    </cofactor>
</comment>
<comment type="pathway">
    <text evidence="1">Carbohydrate degradation; L-fucose degradation; L-lactaldehyde and glycerone phosphate from L-fucose: step 1/3.</text>
</comment>
<comment type="subunit">
    <text evidence="1">Homohexamer.</text>
</comment>
<comment type="subcellular location">
    <subcellularLocation>
        <location evidence="1">Cytoplasm</location>
    </subcellularLocation>
</comment>
<comment type="similarity">
    <text evidence="1">Belongs to the L-fucose isomerase family.</text>
</comment>
<sequence>MKKISLPKIGIRPVIDGRRMGVRESLEEQTMNMAKATAALLTEKLRHACGAAVECVISDTCIAGMAEAAACEEKFSSQNVGLTITVTPCWCYGSETIDMDPTRPKAIWGFNGTERPGAVYLAAALAAHSQKGIPAFSIYGHDVQDADDTSIPADVEEKLLRFARAGLAVASMKGKSYLSLGGVSMGIAGSIVDHNFFESWLGMKVQAVDMTELRRRIDQKIYDEAELEMALAWADKNFRYGEDENNKQYQRNAEQSRAVLRESLLMAMCIRDMMQGNSKLADIGRVEESLGYNAIAAGFQGQRHWTDQYPNGDTAEALLNSSFDWNGVREPFVVATENDSLNGVAMLMGHQLTGTAQVFADVRTYWSPEAIERVTGHKLDGLAEHGIIHLINSGSAALDGSCKQRDSEGNPTMKPHWEISQQEADACLAATEWCPAIHEYFRGGGYSSRFLTEGGVPFTMTRVNIIKGLGPVLQIAEGWSVELPKDVHDILNKRTNSTWPTTWFAPRLTGKGPFTDVYSVMANWGANHGVLTIGHVGADFITLASMLRIPVCMHNVEETKVYRPSAWAAHGMDIEGQDYRACQNYGPLYKR</sequence>
<feature type="chain" id="PRO_1000139955" description="L-fucose isomerase">
    <location>
        <begin position="1"/>
        <end position="591"/>
    </location>
</feature>
<feature type="active site" description="Proton acceptor" evidence="1">
    <location>
        <position position="337"/>
    </location>
</feature>
<feature type="active site" description="Proton acceptor" evidence="1">
    <location>
        <position position="361"/>
    </location>
</feature>
<feature type="binding site" evidence="1">
    <location>
        <position position="337"/>
    </location>
    <ligand>
        <name>Mn(2+)</name>
        <dbReference type="ChEBI" id="CHEBI:29035"/>
    </ligand>
</feature>
<feature type="binding site" evidence="1">
    <location>
        <position position="361"/>
    </location>
    <ligand>
        <name>Mn(2+)</name>
        <dbReference type="ChEBI" id="CHEBI:29035"/>
    </ligand>
</feature>
<feature type="binding site" evidence="1">
    <location>
        <position position="528"/>
    </location>
    <ligand>
        <name>Mn(2+)</name>
        <dbReference type="ChEBI" id="CHEBI:29035"/>
    </ligand>
</feature>